<comment type="function">
    <text evidence="1">Component of the RavA-ViaA chaperone complex, which may act on the membrane to optimize the function of some of the respiratory chains. ViaA stimulates the ATPase activity of RavA.</text>
</comment>
<comment type="subunit">
    <text evidence="1">Homodimer. Interacts with RavA.</text>
</comment>
<comment type="subcellular location">
    <subcellularLocation>
        <location evidence="1">Cytoplasm</location>
    </subcellularLocation>
</comment>
<comment type="similarity">
    <text evidence="1">Belongs to the ViaA family.</text>
</comment>
<evidence type="ECO:0000255" key="1">
    <source>
        <dbReference type="HAMAP-Rule" id="MF_01626"/>
    </source>
</evidence>
<name>VIAA_SALHS</name>
<protein>
    <recommendedName>
        <fullName evidence="1">Regulatory protein ViaA</fullName>
    </recommendedName>
    <alternativeName>
        <fullName evidence="1">VWA interacting with AAA+ ATPase</fullName>
    </alternativeName>
</protein>
<accession>B4TAY7</accession>
<proteinExistence type="inferred from homology"/>
<feature type="chain" id="PRO_1000186158" description="Regulatory protein ViaA">
    <location>
        <begin position="1"/>
        <end position="483"/>
    </location>
</feature>
<sequence>MLTLDTLNTMLAVSEEGMVEEMILALLASPQLVIFFEKFPRLKNAVTADLPRWREALRSRLKDAHVPPELTEEVMCYQQSQLLSTPQFIVQLPQILALLHRLHSPYAAQAKQLTESNSTFTPALHTLFLQRWRLSLVVQATTLNQQLLEEEREQLLSDVQERMTLSGQLEPTLAENDNAAGRLWDMSAGQLKRGDYQLIVKYGEFLAAQPELMQLAEQLGRSREAKSVPKKDAPMETFRTLVREPATVPEQVDGIQQGDDILRLLPPELATLGITELEYEFYRRLVEKQLLTYRLHGEAWREKVTERPVVHQDVDEQPRGPFIVCVDTSGSMGGFNEQCAKAFCLALMRVALADNRRCFIMLFSTDVVRYELSGPEGIEQAIRFLSQRFRGGTDIASCFRAIIERMQGREWFDADAVVISDFIAQRLPDDVVSKVGELQRLHQHRFHAVAMSAHGKPGIMRIFDHIWRFDTGMRSRLLRRWRR</sequence>
<reference key="1">
    <citation type="journal article" date="2011" name="J. Bacteriol.">
        <title>Comparative genomics of 28 Salmonella enterica isolates: evidence for CRISPR-mediated adaptive sublineage evolution.</title>
        <authorList>
            <person name="Fricke W.F."/>
            <person name="Mammel M.K."/>
            <person name="McDermott P.F."/>
            <person name="Tartera C."/>
            <person name="White D.G."/>
            <person name="Leclerc J.E."/>
            <person name="Ravel J."/>
            <person name="Cebula T.A."/>
        </authorList>
    </citation>
    <scope>NUCLEOTIDE SEQUENCE [LARGE SCALE GENOMIC DNA]</scope>
    <source>
        <strain>SL476</strain>
    </source>
</reference>
<keyword id="KW-0143">Chaperone</keyword>
<keyword id="KW-0963">Cytoplasm</keyword>
<organism>
    <name type="scientific">Salmonella heidelberg (strain SL476)</name>
    <dbReference type="NCBI Taxonomy" id="454169"/>
    <lineage>
        <taxon>Bacteria</taxon>
        <taxon>Pseudomonadati</taxon>
        <taxon>Pseudomonadota</taxon>
        <taxon>Gammaproteobacteria</taxon>
        <taxon>Enterobacterales</taxon>
        <taxon>Enterobacteriaceae</taxon>
        <taxon>Salmonella</taxon>
    </lineage>
</organism>
<gene>
    <name evidence="1" type="primary">viaA</name>
    <name type="ordered locus">SeHA_C4211</name>
</gene>
<dbReference type="EMBL" id="CP001120">
    <property type="protein sequence ID" value="ACF68972.1"/>
    <property type="molecule type" value="Genomic_DNA"/>
</dbReference>
<dbReference type="RefSeq" id="WP_000956582.1">
    <property type="nucleotide sequence ID" value="NC_011083.1"/>
</dbReference>
<dbReference type="SMR" id="B4TAY7"/>
<dbReference type="KEGG" id="seh:SeHA_C4211"/>
<dbReference type="HOGENOM" id="CLU_022130_0_0_6"/>
<dbReference type="Proteomes" id="UP000001866">
    <property type="component" value="Chromosome"/>
</dbReference>
<dbReference type="GO" id="GO:0005829">
    <property type="term" value="C:cytosol"/>
    <property type="evidence" value="ECO:0007669"/>
    <property type="project" value="TreeGrafter"/>
</dbReference>
<dbReference type="CDD" id="cd01462">
    <property type="entry name" value="VWA_YIEM_type"/>
    <property type="match status" value="1"/>
</dbReference>
<dbReference type="Gene3D" id="3.40.50.410">
    <property type="entry name" value="von Willebrand factor, type A domain"/>
    <property type="match status" value="1"/>
</dbReference>
<dbReference type="HAMAP" id="MF_01626">
    <property type="entry name" value="ViaA"/>
    <property type="match status" value="1"/>
</dbReference>
<dbReference type="InterPro" id="IPR008912">
    <property type="entry name" value="Uncharacterised_CoxE"/>
</dbReference>
<dbReference type="InterPro" id="IPR023481">
    <property type="entry name" value="Uncharacterised_ViaA"/>
</dbReference>
<dbReference type="InterPro" id="IPR002035">
    <property type="entry name" value="VWF_A"/>
</dbReference>
<dbReference type="InterPro" id="IPR036465">
    <property type="entry name" value="vWFA_dom_sf"/>
</dbReference>
<dbReference type="NCBIfam" id="NF008230">
    <property type="entry name" value="PRK10997.1"/>
    <property type="match status" value="1"/>
</dbReference>
<dbReference type="PANTHER" id="PTHR36846">
    <property type="entry name" value="PROTEIN VIAA"/>
    <property type="match status" value="1"/>
</dbReference>
<dbReference type="PANTHER" id="PTHR36846:SF1">
    <property type="entry name" value="PROTEIN VIAA"/>
    <property type="match status" value="1"/>
</dbReference>
<dbReference type="Pfam" id="PF05762">
    <property type="entry name" value="VWA_CoxE"/>
    <property type="match status" value="1"/>
</dbReference>
<dbReference type="SMART" id="SM00327">
    <property type="entry name" value="VWA"/>
    <property type="match status" value="1"/>
</dbReference>
<dbReference type="SUPFAM" id="SSF53300">
    <property type="entry name" value="vWA-like"/>
    <property type="match status" value="1"/>
</dbReference>